<protein>
    <recommendedName>
        <fullName>Uncharacterized tatC-like protein ycf43</fullName>
    </recommendedName>
</protein>
<name>YCF43_CYACA</name>
<evidence type="ECO:0000255" key="1"/>
<evidence type="ECO:0000305" key="2"/>
<geneLocation type="chloroplast"/>
<organism>
    <name type="scientific">Cyanidium caldarium</name>
    <name type="common">Red alga</name>
    <dbReference type="NCBI Taxonomy" id="2771"/>
    <lineage>
        <taxon>Eukaryota</taxon>
        <taxon>Rhodophyta</taxon>
        <taxon>Bangiophyceae</taxon>
        <taxon>Cyanidiales</taxon>
        <taxon>Cyanidiaceae</taxon>
        <taxon>Cyanidium</taxon>
    </lineage>
</organism>
<reference key="1">
    <citation type="journal article" date="2000" name="J. Mol. Evol.">
        <title>The structure and gene repertoire of an ancient red algal plastid genome.</title>
        <authorList>
            <person name="Gloeckner G."/>
            <person name="Rosenthal A."/>
            <person name="Valentin K.-U."/>
        </authorList>
    </citation>
    <scope>NUCLEOTIDE SEQUENCE [LARGE SCALE GENOMIC DNA]</scope>
    <source>
        <strain>RK-1</strain>
    </source>
</reference>
<gene>
    <name type="primary">ycf43</name>
    <name type="synonym">ycf39</name>
</gene>
<keyword id="KW-0150">Chloroplast</keyword>
<keyword id="KW-0472">Membrane</keyword>
<keyword id="KW-0934">Plastid</keyword>
<keyword id="KW-0812">Transmembrane</keyword>
<keyword id="KW-1133">Transmembrane helix</keyword>
<sequence>MADKKANDSFQMSIYEHLEELRQRSIESIVALLISMVVCSLNINILIELIKQPAIGIKFLQLSPGEYFFTSIKITLYLGIILSSPIIFYEIIIFIIPGLTKKERRLLIPILIASGCLFVAGLIFGYIYITPIAVRFFINYGKDMIEPIWSFKEYFDFIILSLFSTAISFQIPIFQILLGSLKIINSKMMLSVWRYVVVGSTIFSAIITPSTDPLIQLFLSVAVMFLYFSSILVLKLFKL</sequence>
<feature type="chain" id="PRO_0000098098" description="Uncharacterized tatC-like protein ycf43">
    <location>
        <begin position="1"/>
        <end position="239"/>
    </location>
</feature>
<feature type="transmembrane region" description="Helical" evidence="1">
    <location>
        <begin position="30"/>
        <end position="50"/>
    </location>
</feature>
<feature type="transmembrane region" description="Helical" evidence="1">
    <location>
        <begin position="76"/>
        <end position="96"/>
    </location>
</feature>
<feature type="transmembrane region" description="Helical" evidence="1">
    <location>
        <begin position="107"/>
        <end position="127"/>
    </location>
</feature>
<feature type="transmembrane region" description="Helical" evidence="1">
    <location>
        <begin position="157"/>
        <end position="177"/>
    </location>
</feature>
<feature type="transmembrane region" description="Helical" evidence="1">
    <location>
        <begin position="188"/>
        <end position="208"/>
    </location>
</feature>
<feature type="transmembrane region" description="Helical" evidence="1">
    <location>
        <begin position="214"/>
        <end position="234"/>
    </location>
</feature>
<proteinExistence type="inferred from homology"/>
<comment type="subcellular location">
    <subcellularLocation>
        <location evidence="2">Plastid</location>
        <location evidence="2">Chloroplast membrane</location>
        <topology evidence="2">Multi-pass membrane protein</topology>
    </subcellularLocation>
</comment>
<comment type="similarity">
    <text evidence="2">Belongs to the TatC family.</text>
</comment>
<accession>Q9TLS5</accession>
<dbReference type="EMBL" id="AF022186">
    <property type="protein sequence ID" value="AAF12900.1"/>
    <property type="molecule type" value="Genomic_DNA"/>
</dbReference>
<dbReference type="SMR" id="Q9TLS5"/>
<dbReference type="GO" id="GO:0031969">
    <property type="term" value="C:chloroplast membrane"/>
    <property type="evidence" value="ECO:0007669"/>
    <property type="project" value="UniProtKB-SubCell"/>
</dbReference>
<dbReference type="GO" id="GO:0033281">
    <property type="term" value="C:TAT protein transport complex"/>
    <property type="evidence" value="ECO:0007669"/>
    <property type="project" value="TreeGrafter"/>
</dbReference>
<dbReference type="GO" id="GO:0009977">
    <property type="term" value="F:proton motive force dependent protein transmembrane transporter activity"/>
    <property type="evidence" value="ECO:0007669"/>
    <property type="project" value="TreeGrafter"/>
</dbReference>
<dbReference type="GO" id="GO:0065002">
    <property type="term" value="P:intracellular protein transmembrane transport"/>
    <property type="evidence" value="ECO:0007669"/>
    <property type="project" value="TreeGrafter"/>
</dbReference>
<dbReference type="GO" id="GO:0043953">
    <property type="term" value="P:protein transport by the Tat complex"/>
    <property type="evidence" value="ECO:0007669"/>
    <property type="project" value="TreeGrafter"/>
</dbReference>
<dbReference type="HAMAP" id="MF_00902">
    <property type="entry name" value="TatC"/>
    <property type="match status" value="1"/>
</dbReference>
<dbReference type="InterPro" id="IPR019820">
    <property type="entry name" value="Sec-indep_translocase_CS"/>
</dbReference>
<dbReference type="InterPro" id="IPR002033">
    <property type="entry name" value="TatC"/>
</dbReference>
<dbReference type="NCBIfam" id="TIGR00945">
    <property type="entry name" value="tatC"/>
    <property type="match status" value="1"/>
</dbReference>
<dbReference type="PANTHER" id="PTHR30371">
    <property type="entry name" value="SEC-INDEPENDENT PROTEIN TRANSLOCASE PROTEIN TATC"/>
    <property type="match status" value="1"/>
</dbReference>
<dbReference type="PANTHER" id="PTHR30371:SF0">
    <property type="entry name" value="SEC-INDEPENDENT PROTEIN TRANSLOCASE PROTEIN TATC, CHLOROPLASTIC-RELATED"/>
    <property type="match status" value="1"/>
</dbReference>
<dbReference type="Pfam" id="PF00902">
    <property type="entry name" value="TatC"/>
    <property type="match status" value="1"/>
</dbReference>
<dbReference type="PRINTS" id="PR01840">
    <property type="entry name" value="TATCFAMILY"/>
</dbReference>
<dbReference type="PROSITE" id="PS01218">
    <property type="entry name" value="TATC"/>
    <property type="match status" value="1"/>
</dbReference>